<dbReference type="EC" id="2.7.7.6"/>
<dbReference type="EMBL" id="M26173">
    <property type="protein sequence ID" value="AAA42919.1"/>
    <property type="molecule type" value="Genomic_DNA"/>
</dbReference>
<dbReference type="EMBL" id="M26173">
    <property type="protein sequence ID" value="AAA42920.1"/>
    <property type="molecule type" value="Genomic_DNA"/>
</dbReference>
<dbReference type="EMBL" id="AF482758">
    <property type="protein sequence ID" value="AAM13599.1"/>
    <property type="molecule type" value="Genomic_DNA"/>
</dbReference>
<dbReference type="PIR" id="A31879">
    <property type="entry name" value="RNVZCP"/>
</dbReference>
<dbReference type="RefSeq" id="NP_619941.1">
    <property type="nucleotide sequence ID" value="NC_003663.2"/>
</dbReference>
<dbReference type="SMR" id="P17474"/>
<dbReference type="GeneID" id="1486036"/>
<dbReference type="KEGG" id="vg:1486036"/>
<dbReference type="Proteomes" id="UP000152733">
    <property type="component" value="Segment"/>
</dbReference>
<dbReference type="GO" id="GO:0000428">
    <property type="term" value="C:DNA-directed RNA polymerase complex"/>
    <property type="evidence" value="ECO:0007669"/>
    <property type="project" value="UniProtKB-KW"/>
</dbReference>
<dbReference type="GO" id="GO:0044423">
    <property type="term" value="C:virion component"/>
    <property type="evidence" value="ECO:0007669"/>
    <property type="project" value="UniProtKB-KW"/>
</dbReference>
<dbReference type="GO" id="GO:0003677">
    <property type="term" value="F:DNA binding"/>
    <property type="evidence" value="ECO:0007669"/>
    <property type="project" value="InterPro"/>
</dbReference>
<dbReference type="GO" id="GO:0003899">
    <property type="term" value="F:DNA-directed RNA polymerase activity"/>
    <property type="evidence" value="ECO:0007669"/>
    <property type="project" value="UniProtKB-EC"/>
</dbReference>
<dbReference type="GO" id="GO:0046872">
    <property type="term" value="F:metal ion binding"/>
    <property type="evidence" value="ECO:0007669"/>
    <property type="project" value="UniProtKB-KW"/>
</dbReference>
<dbReference type="GO" id="GO:0032549">
    <property type="term" value="F:ribonucleoside binding"/>
    <property type="evidence" value="ECO:0007669"/>
    <property type="project" value="InterPro"/>
</dbReference>
<dbReference type="GO" id="GO:0006351">
    <property type="term" value="P:DNA-templated transcription"/>
    <property type="evidence" value="ECO:0007669"/>
    <property type="project" value="InterPro"/>
</dbReference>
<dbReference type="Gene3D" id="2.40.50.150">
    <property type="match status" value="1"/>
</dbReference>
<dbReference type="Gene3D" id="3.90.1100.10">
    <property type="match status" value="2"/>
</dbReference>
<dbReference type="Gene3D" id="2.40.270.10">
    <property type="entry name" value="DNA-directed RNA polymerase, subunit 2, domain 6"/>
    <property type="match status" value="1"/>
</dbReference>
<dbReference type="Gene3D" id="3.90.1800.10">
    <property type="entry name" value="RNA polymerase alpha subunit dimerisation domain"/>
    <property type="match status" value="1"/>
</dbReference>
<dbReference type="InterPro" id="IPR015712">
    <property type="entry name" value="DNA-dir_RNA_pol_su2"/>
</dbReference>
<dbReference type="InterPro" id="IPR007120">
    <property type="entry name" value="DNA-dir_RNAP_su2_dom"/>
</dbReference>
<dbReference type="InterPro" id="IPR037033">
    <property type="entry name" value="DNA-dir_RNAP_su2_hyb_sf"/>
</dbReference>
<dbReference type="InterPro" id="IPR024390">
    <property type="entry name" value="RNA_pol_132_poxvirus"/>
</dbReference>
<dbReference type="InterPro" id="IPR007121">
    <property type="entry name" value="RNA_pol_bsu_CS"/>
</dbReference>
<dbReference type="InterPro" id="IPR007645">
    <property type="entry name" value="RNA_pol_Rpb2_3"/>
</dbReference>
<dbReference type="InterPro" id="IPR007647">
    <property type="entry name" value="RNA_pol_Rpb2_5"/>
</dbReference>
<dbReference type="InterPro" id="IPR007641">
    <property type="entry name" value="RNA_pol_Rpb2_7"/>
</dbReference>
<dbReference type="InterPro" id="IPR014724">
    <property type="entry name" value="RNA_pol_RPB2_OB-fold"/>
</dbReference>
<dbReference type="PANTHER" id="PTHR20856">
    <property type="entry name" value="DNA-DIRECTED RNA POLYMERASE I SUBUNIT 2"/>
    <property type="match status" value="1"/>
</dbReference>
<dbReference type="Pfam" id="PF04565">
    <property type="entry name" value="RNA_pol_Rpb2_3"/>
    <property type="match status" value="1"/>
</dbReference>
<dbReference type="Pfam" id="PF04567">
    <property type="entry name" value="RNA_pol_Rpb2_5"/>
    <property type="match status" value="1"/>
</dbReference>
<dbReference type="Pfam" id="PF00562">
    <property type="entry name" value="RNA_pol_Rpb2_6"/>
    <property type="match status" value="1"/>
</dbReference>
<dbReference type="Pfam" id="PF04560">
    <property type="entry name" value="RNA_pol_Rpb2_7"/>
    <property type="match status" value="1"/>
</dbReference>
<dbReference type="Pfam" id="PF12415">
    <property type="entry name" value="rpo132"/>
    <property type="match status" value="1"/>
</dbReference>
<dbReference type="SUPFAM" id="SSF64484">
    <property type="entry name" value="beta and beta-prime subunits of DNA dependent RNA-polymerase"/>
    <property type="match status" value="1"/>
</dbReference>
<dbReference type="PROSITE" id="PS01166">
    <property type="entry name" value="RNA_POL_BETA"/>
    <property type="match status" value="1"/>
</dbReference>
<keyword id="KW-0024">Alternative initiation</keyword>
<keyword id="KW-0240">DNA-directed RNA polymerase</keyword>
<keyword id="KW-0479">Metal-binding</keyword>
<keyword id="KW-0548">Nucleotidyltransferase</keyword>
<keyword id="KW-0804">Transcription</keyword>
<keyword id="KW-0808">Transferase</keyword>
<keyword id="KW-0946">Virion</keyword>
<sequence>MKKNTDSEMDQRLGYKFLVPDPKAGVFYRPLHFQYVSYSNFILHRLHEILTVKRPLLSFKNNTERIMIEISNVKVTPPDYSPIIASIKGKSYDALATFTVNIFKEVMTKEGISITKISSYEGKDSHLIKIPLLIGYGNKNPLDTAKYLVPNVIGGVFINKQSVEKVGINLVEKITTWPKFRVVKPNSFTFSFSSVSPPNVLPTRYRHYKISLDISQLEASNISSTKTFITVNIVLLSQYLSRVSLEFIRRSLSYDMPPEVVYLVNAIIDSAKRLTESITDFNIDTYINDLVEAEHIKQKSQLTINEFKYEMLHNFLPHMNYTPDQLKGFYMISLLRKFLYCIYHTSRYPDRDSMVCHRILTYGKYFETLAHDELENYIGNIRNDIMNNHKNRGTYAVNIHVLTTPGLNHAFSSLLSGKFKKSDGSYRTHPHYSWMQNISIPRSVGFYPDQVKISKMFSVRKYHPSQYLYFCSSDVPERGPQVGLVSQLSVLSSITNILTSEYLDLEKKICEYIRSYYKDDISYFETGFPITIENALVASLNPNMICDFVTDFRRRKRMGFFGNLEVGITLVRDHMNEIRINIGAGRLVRPFLVVDNGELMMDVCPELESRLDDMTFSDIQKEFPHVIEMVDIEQFTFSNVCESVQKFRMMSKDERKQYDLCDFPAEFRDGYVASSLVGINHNSGPRAILGCAQAKQAISCLSSDIRNKIDNGIHLMYPERPIVISKALETSKIAANCFGQHVTIALMSYKGINQEDGIIIKKQFIQRGGLDIVTAKKHQVEIPLENFNNKERDRSNAYSKLESNGLVRLNAFLESGDAMARNISSRTLEDDFARDNQISFDVSEKYTDMYKSRVERVQVELTDKVKVRVLTMKERRPILGDKFTTRTSQKGTVAYIADETELPYDENGITPDVIINSTSIFSRKTISMLIEVILTAAYSAKPYNNKGENRPVCFPSSNETSIDTYMQFAKQCYEHSNPKLSDEELSDKIFCEKILYDPETDKPYASKVFFGPIYYLRLRHLTQDKATVRCRGKKTKLIRQANEGRKRGGGIKFGEMERDCLIAHGAANTITEVLKDSEEDYQDVYVCENCGDIAAQIKGINTCLRCSKLNLSPLLTKIDTTHVSKVFLTQMNARGVKVKLDFERRPPSFYKPLDKVDLKPSFLA</sequence>
<organismHost>
    <name type="scientific">Bos taurus</name>
    <name type="common">Bovine</name>
    <dbReference type="NCBI Taxonomy" id="9913"/>
</organismHost>
<organismHost>
    <name type="scientific">Felis catus</name>
    <name type="common">Cat</name>
    <name type="synonym">Felis silvestris catus</name>
    <dbReference type="NCBI Taxonomy" id="9685"/>
</organismHost>
<organismHost>
    <name type="scientific">Homo sapiens</name>
    <name type="common">Human</name>
    <dbReference type="NCBI Taxonomy" id="9606"/>
</organismHost>
<organismHost>
    <name type="scientific">Loxodonta africana</name>
    <name type="common">African elephant</name>
    <dbReference type="NCBI Taxonomy" id="9785"/>
</organismHost>
<organismHost>
    <name type="scientific">Microtus agrestis</name>
    <name type="common">Short-tailed field vole</name>
    <dbReference type="NCBI Taxonomy" id="29092"/>
</organismHost>
<organismHost>
    <name type="scientific">Mus musculus</name>
    <name type="common">Mouse</name>
    <dbReference type="NCBI Taxonomy" id="10090"/>
</organismHost>
<organismHost>
    <name type="scientific">Myodes glareolus</name>
    <name type="common">Bank vole</name>
    <name type="synonym">Clethrionomys glareolus</name>
    <dbReference type="NCBI Taxonomy" id="447135"/>
</organismHost>
<feature type="chain" id="PRO_0000031058" description="DNA-directed RNA polymerase 132 kDa polypeptide">
    <location>
        <begin position="1"/>
        <end position="1164"/>
    </location>
</feature>
<feature type="splice variant" id="VSP_018881" description="In isoform 2." evidence="2">
    <location>
        <begin position="1"/>
        <end position="8"/>
    </location>
</feature>
<accession>P17474</accession>
<accession>Q90025</accession>
<name>RP132_CWPXB</name>
<gene>
    <name type="primary">RPO132</name>
    <name type="ordered locus">CPXV157</name>
</gene>
<proteinExistence type="inferred from homology"/>
<organism>
    <name type="scientific">Cowpox virus (strain Brighton Red)</name>
    <name type="common">CPV</name>
    <dbReference type="NCBI Taxonomy" id="265872"/>
    <lineage>
        <taxon>Viruses</taxon>
        <taxon>Varidnaviria</taxon>
        <taxon>Bamfordvirae</taxon>
        <taxon>Nucleocytoviricota</taxon>
        <taxon>Pokkesviricetes</taxon>
        <taxon>Chitovirales</taxon>
        <taxon>Poxviridae</taxon>
        <taxon>Chordopoxvirinae</taxon>
        <taxon>Orthopoxvirus</taxon>
        <taxon>Cowpox virus</taxon>
    </lineage>
</organism>
<reference key="1">
    <citation type="journal article" date="1989" name="J. Virol.">
        <title>The second-largest subunit of the poxvirus RNA polymerase is similar to the corresponding subunits of procaryotic and eucaryotic RNA polymerases.</title>
        <authorList>
            <person name="Patel D.D."/>
            <person name="Pickup D.J."/>
        </authorList>
    </citation>
    <scope>NUCLEOTIDE SEQUENCE [GENOMIC DNA]</scope>
</reference>
<reference key="2">
    <citation type="submission" date="2003-05" db="EMBL/GenBank/DDBJ databases">
        <authorList>
            <person name="Dietrich F.S."/>
            <person name="Ray C.A."/>
            <person name="Sharma D.A."/>
            <person name="Allen A."/>
            <person name="Pickup D.J."/>
        </authorList>
    </citation>
    <scope>NUCLEOTIDE SEQUENCE [LARGE SCALE GENOMIC DNA]</scope>
</reference>
<comment type="function">
    <text evidence="1">Part of the DNA-dependent RNA polymerase which catalyzes the transcription of viral DNA into RNA using the four ribonucleoside triphosphates as substrates. Responsible for the transcription of early, intermediate and late genes. DNA-dependent RNA polymerase associates with the early transcription factor (ETF), itself composed of D6 and A7, thereby allowing the early genes transcription. Late transcription, and probably also intermediate transcription, require newly synthesized RNA polymerase (By similarity).</text>
</comment>
<comment type="catalytic activity">
    <reaction>
        <text>RNA(n) + a ribonucleoside 5'-triphosphate = RNA(n+1) + diphosphate</text>
        <dbReference type="Rhea" id="RHEA:21248"/>
        <dbReference type="Rhea" id="RHEA-COMP:14527"/>
        <dbReference type="Rhea" id="RHEA-COMP:17342"/>
        <dbReference type="ChEBI" id="CHEBI:33019"/>
        <dbReference type="ChEBI" id="CHEBI:61557"/>
        <dbReference type="ChEBI" id="CHEBI:140395"/>
        <dbReference type="EC" id="2.7.7.6"/>
    </reaction>
</comment>
<comment type="subunit">
    <text evidence="1">The DNA-dependent RNA polymerase used for intermediate and late genes expression consists of eight subunits (147) kDa, (133) kDa, (35) kDa, (30) kDa, (22) kDa, (19) kDa, (18) kDa and (7) kDa totalling more than 500 kDa in mass. The same holoenzyme, with the addition of the transcription-specificity factor RAP94, is used for early gene expression (By similarity).</text>
</comment>
<comment type="subcellular location">
    <subcellularLocation>
        <location evidence="1">Virion</location>
    </subcellularLocation>
    <text evidence="1">All the enzymes and other proteins required to synthesize early mRNAs are packaged within the virion core along with the DNA genome. This is necessary because viral early mRNAs are synthesized within minutes after virus entry into the cell and are extruded through pores in the core particle (By similarity).</text>
</comment>
<comment type="alternative products">
    <event type="alternative initiation"/>
    <isoform>
        <id>P17474-1</id>
        <name>1</name>
        <name>Late specific</name>
        <sequence type="displayed"/>
    </isoform>
    <isoform>
        <id>P17474-2</id>
        <name>2</name>
        <name>Early and Late</name>
        <sequence type="described" ref="VSP_018881"/>
    </isoform>
</comment>
<comment type="miscellaneous">
    <molecule>Isoform 1</molecule>
    <text>Produced at late time only.</text>
</comment>
<comment type="miscellaneous">
    <molecule>Isoform 2</molecule>
    <text evidence="2">Produced both at early and late times.</text>
</comment>
<comment type="similarity">
    <text evidence="2">Belongs to the RNA polymerase beta chain family.</text>
</comment>
<evidence type="ECO:0000250" key="1"/>
<evidence type="ECO:0000305" key="2"/>
<protein>
    <recommendedName>
        <fullName>DNA-directed RNA polymerase 132 kDa polypeptide</fullName>
        <ecNumber>2.7.7.6</ecNumber>
    </recommendedName>
</protein>